<reference key="1">
    <citation type="journal article" date="2001" name="Nature">
        <title>Massive gene decay in the leprosy bacillus.</title>
        <authorList>
            <person name="Cole S.T."/>
            <person name="Eiglmeier K."/>
            <person name="Parkhill J."/>
            <person name="James K.D."/>
            <person name="Thomson N.R."/>
            <person name="Wheeler P.R."/>
            <person name="Honore N."/>
            <person name="Garnier T."/>
            <person name="Churcher C.M."/>
            <person name="Harris D.E."/>
            <person name="Mungall K.L."/>
            <person name="Basham D."/>
            <person name="Brown D."/>
            <person name="Chillingworth T."/>
            <person name="Connor R."/>
            <person name="Davies R.M."/>
            <person name="Devlin K."/>
            <person name="Duthoy S."/>
            <person name="Feltwell T."/>
            <person name="Fraser A."/>
            <person name="Hamlin N."/>
            <person name="Holroyd S."/>
            <person name="Hornsby T."/>
            <person name="Jagels K."/>
            <person name="Lacroix C."/>
            <person name="Maclean J."/>
            <person name="Moule S."/>
            <person name="Murphy L.D."/>
            <person name="Oliver K."/>
            <person name="Quail M.A."/>
            <person name="Rajandream M.A."/>
            <person name="Rutherford K.M."/>
            <person name="Rutter S."/>
            <person name="Seeger K."/>
            <person name="Simon S."/>
            <person name="Simmonds M."/>
            <person name="Skelton J."/>
            <person name="Squares R."/>
            <person name="Squares S."/>
            <person name="Stevens K."/>
            <person name="Taylor K."/>
            <person name="Whitehead S."/>
            <person name="Woodward J.R."/>
            <person name="Barrell B.G."/>
        </authorList>
    </citation>
    <scope>NUCLEOTIDE SEQUENCE [LARGE SCALE GENOMIC DNA]</scope>
    <source>
        <strain>TN</strain>
    </source>
</reference>
<protein>
    <recommendedName>
        <fullName evidence="1">Ribose-5-phosphate isomerase B</fullName>
        <ecNumber evidence="1">5.3.1.6</ecNumber>
    </recommendedName>
    <alternativeName>
        <fullName evidence="1">Phosphoriboisomerase B</fullName>
    </alternativeName>
</protein>
<gene>
    <name evidence="1" type="primary">rpiB</name>
    <name type="ordered locus">ML1484</name>
</gene>
<accession>Q9CBY1</accession>
<evidence type="ECO:0000250" key="1">
    <source>
        <dbReference type="UniProtKB" id="P9WKD7"/>
    </source>
</evidence>
<evidence type="ECO:0000305" key="2"/>
<comment type="function">
    <text evidence="1">Catalyzes the interconversion of ribulose-5-P and ribose-5-P.</text>
</comment>
<comment type="catalytic activity">
    <reaction evidence="1">
        <text>aldehydo-D-ribose 5-phosphate = D-ribulose 5-phosphate</text>
        <dbReference type="Rhea" id="RHEA:14657"/>
        <dbReference type="ChEBI" id="CHEBI:58121"/>
        <dbReference type="ChEBI" id="CHEBI:58273"/>
        <dbReference type="EC" id="5.3.1.6"/>
    </reaction>
</comment>
<comment type="pathway">
    <text evidence="1">Carbohydrate degradation; pentose phosphate pathway; D-ribose 5-phosphate from D-ribulose 5-phosphate (non-oxidative stage): step 1/1.</text>
</comment>
<comment type="subunit">
    <text evidence="1">Homodimer.</text>
</comment>
<comment type="miscellaneous">
    <text evidence="1">In mycobacterial enzymes, the usual proton acceptor is not a cysteine, but is remplaced by a glutamate.</text>
</comment>
<comment type="similarity">
    <text evidence="2">Belongs to the LacAB/RpiB family.</text>
</comment>
<proteinExistence type="inferred from homology"/>
<dbReference type="EC" id="5.3.1.6" evidence="1"/>
<dbReference type="EMBL" id="AL583922">
    <property type="protein sequence ID" value="CAC30434.1"/>
    <property type="molecule type" value="Genomic_DNA"/>
</dbReference>
<dbReference type="PIR" id="E87094">
    <property type="entry name" value="E87094"/>
</dbReference>
<dbReference type="RefSeq" id="NP_302043.1">
    <property type="nucleotide sequence ID" value="NC_002677.1"/>
</dbReference>
<dbReference type="SMR" id="Q9CBY1"/>
<dbReference type="STRING" id="272631.gene:17575324"/>
<dbReference type="KEGG" id="mle:ML1484"/>
<dbReference type="PATRIC" id="fig|272631.5.peg.2781"/>
<dbReference type="Leproma" id="ML1484"/>
<dbReference type="eggNOG" id="COG0698">
    <property type="taxonomic scope" value="Bacteria"/>
</dbReference>
<dbReference type="HOGENOM" id="CLU_091396_4_0_11"/>
<dbReference type="OrthoDB" id="1778624at2"/>
<dbReference type="UniPathway" id="UPA00115">
    <property type="reaction ID" value="UER00412"/>
</dbReference>
<dbReference type="Proteomes" id="UP000000806">
    <property type="component" value="Chromosome"/>
</dbReference>
<dbReference type="GO" id="GO:0004751">
    <property type="term" value="F:ribose-5-phosphate isomerase activity"/>
    <property type="evidence" value="ECO:0000250"/>
    <property type="project" value="UniProtKB"/>
</dbReference>
<dbReference type="GO" id="GO:0019316">
    <property type="term" value="P:D-allose catabolic process"/>
    <property type="evidence" value="ECO:0007669"/>
    <property type="project" value="TreeGrafter"/>
</dbReference>
<dbReference type="GO" id="GO:0009052">
    <property type="term" value="P:pentose-phosphate shunt, non-oxidative branch"/>
    <property type="evidence" value="ECO:0000250"/>
    <property type="project" value="UniProtKB"/>
</dbReference>
<dbReference type="FunFam" id="3.40.1400.10:FF:000002">
    <property type="entry name" value="Ribose-5-phosphate isomerase B"/>
    <property type="match status" value="1"/>
</dbReference>
<dbReference type="Gene3D" id="3.40.1400.10">
    <property type="entry name" value="Sugar-phosphate isomerase, RpiB/LacA/LacB"/>
    <property type="match status" value="1"/>
</dbReference>
<dbReference type="InterPro" id="IPR011860">
    <property type="entry name" value="Rib-5-P_Isoase_Actino"/>
</dbReference>
<dbReference type="InterPro" id="IPR003500">
    <property type="entry name" value="RpiB_LacA_LacB"/>
</dbReference>
<dbReference type="InterPro" id="IPR036569">
    <property type="entry name" value="RpiB_LacA_LacB_sf"/>
</dbReference>
<dbReference type="NCBIfam" id="NF004051">
    <property type="entry name" value="PRK05571.1"/>
    <property type="match status" value="1"/>
</dbReference>
<dbReference type="NCBIfam" id="TIGR02133">
    <property type="entry name" value="RPI_actino"/>
    <property type="match status" value="1"/>
</dbReference>
<dbReference type="NCBIfam" id="TIGR00689">
    <property type="entry name" value="rpiB_lacA_lacB"/>
    <property type="match status" value="1"/>
</dbReference>
<dbReference type="PANTHER" id="PTHR30345:SF0">
    <property type="entry name" value="DNA DAMAGE-REPAIR_TOLERATION PROTEIN DRT102"/>
    <property type="match status" value="1"/>
</dbReference>
<dbReference type="PANTHER" id="PTHR30345">
    <property type="entry name" value="RIBOSE-5-PHOSPHATE ISOMERASE B"/>
    <property type="match status" value="1"/>
</dbReference>
<dbReference type="Pfam" id="PF02502">
    <property type="entry name" value="LacAB_rpiB"/>
    <property type="match status" value="1"/>
</dbReference>
<dbReference type="PIRSF" id="PIRSF005384">
    <property type="entry name" value="RpiB_LacA_B"/>
    <property type="match status" value="1"/>
</dbReference>
<dbReference type="SUPFAM" id="SSF89623">
    <property type="entry name" value="Ribose/Galactose isomerase RpiB/AlsB"/>
    <property type="match status" value="1"/>
</dbReference>
<sequence>MSGMRVYLGADHAGYELKRQIIEHLKQSGHQPIDCGAFSYDVDDEYPAFCITAATRTVADPGSLGIVLGGSGNGEQIAANKVVGARCALAWSVETARLAREHNNAQLIGIGGRMHTVAEALTIVDAFVTTPWSEAQRHQRRIDILAEFERTHQAPPVPGAQA</sequence>
<keyword id="KW-0119">Carbohydrate metabolism</keyword>
<keyword id="KW-0413">Isomerase</keyword>
<keyword id="KW-1185">Reference proteome</keyword>
<name>RPIB_MYCLE</name>
<feature type="chain" id="PRO_0000251147" description="Ribose-5-phosphate isomerase B">
    <location>
        <begin position="1"/>
        <end position="162"/>
    </location>
</feature>
<feature type="active site" description="Proton acceptor" evidence="1">
    <location>
        <position position="75"/>
    </location>
</feature>
<feature type="active site" description="Proton donor" evidence="1">
    <location>
        <position position="102"/>
    </location>
</feature>
<feature type="binding site" evidence="1">
    <location>
        <begin position="11"/>
        <end position="12"/>
    </location>
    <ligand>
        <name>D-ribulose 5-phosphate</name>
        <dbReference type="ChEBI" id="CHEBI:58121"/>
    </ligand>
</feature>
<feature type="binding site" evidence="1">
    <location>
        <begin position="70"/>
        <end position="74"/>
    </location>
    <ligand>
        <name>D-ribulose 5-phosphate</name>
        <dbReference type="ChEBI" id="CHEBI:58121"/>
    </ligand>
</feature>
<feature type="binding site" evidence="1">
    <location>
        <position position="103"/>
    </location>
    <ligand>
        <name>D-ribulose 5-phosphate</name>
        <dbReference type="ChEBI" id="CHEBI:58121"/>
    </ligand>
</feature>
<feature type="binding site" evidence="1">
    <location>
        <position position="113"/>
    </location>
    <ligand>
        <name>D-ribulose 5-phosphate</name>
        <dbReference type="ChEBI" id="CHEBI:58121"/>
    </ligand>
</feature>
<feature type="binding site" evidence="1">
    <location>
        <position position="137"/>
    </location>
    <ligand>
        <name>D-ribulose 5-phosphate</name>
        <dbReference type="ChEBI" id="CHEBI:58121"/>
    </ligand>
</feature>
<feature type="binding site" evidence="1">
    <location>
        <position position="141"/>
    </location>
    <ligand>
        <name>D-ribulose 5-phosphate</name>
        <dbReference type="ChEBI" id="CHEBI:58121"/>
    </ligand>
</feature>
<organism>
    <name type="scientific">Mycobacterium leprae (strain TN)</name>
    <dbReference type="NCBI Taxonomy" id="272631"/>
    <lineage>
        <taxon>Bacteria</taxon>
        <taxon>Bacillati</taxon>
        <taxon>Actinomycetota</taxon>
        <taxon>Actinomycetes</taxon>
        <taxon>Mycobacteriales</taxon>
        <taxon>Mycobacteriaceae</taxon>
        <taxon>Mycobacterium</taxon>
    </lineage>
</organism>